<dbReference type="EMBL" id="CP000449">
    <property type="protein sequence ID" value="ABI65503.1"/>
    <property type="molecule type" value="Genomic_DNA"/>
</dbReference>
<dbReference type="RefSeq" id="WP_011643150.1">
    <property type="nucleotide sequence ID" value="NC_008347.1"/>
</dbReference>
<dbReference type="SMR" id="Q0AQD4"/>
<dbReference type="STRING" id="394221.Mmar10_1210"/>
<dbReference type="KEGG" id="mmr:Mmar10_1210"/>
<dbReference type="eggNOG" id="COG0359">
    <property type="taxonomic scope" value="Bacteria"/>
</dbReference>
<dbReference type="HOGENOM" id="CLU_078938_1_0_5"/>
<dbReference type="OrthoDB" id="9788336at2"/>
<dbReference type="Proteomes" id="UP000001964">
    <property type="component" value="Chromosome"/>
</dbReference>
<dbReference type="GO" id="GO:1990904">
    <property type="term" value="C:ribonucleoprotein complex"/>
    <property type="evidence" value="ECO:0007669"/>
    <property type="project" value="UniProtKB-KW"/>
</dbReference>
<dbReference type="GO" id="GO:0005840">
    <property type="term" value="C:ribosome"/>
    <property type="evidence" value="ECO:0007669"/>
    <property type="project" value="UniProtKB-KW"/>
</dbReference>
<dbReference type="GO" id="GO:0019843">
    <property type="term" value="F:rRNA binding"/>
    <property type="evidence" value="ECO:0007669"/>
    <property type="project" value="UniProtKB-UniRule"/>
</dbReference>
<dbReference type="GO" id="GO:0003735">
    <property type="term" value="F:structural constituent of ribosome"/>
    <property type="evidence" value="ECO:0007669"/>
    <property type="project" value="InterPro"/>
</dbReference>
<dbReference type="GO" id="GO:0006412">
    <property type="term" value="P:translation"/>
    <property type="evidence" value="ECO:0007669"/>
    <property type="project" value="UniProtKB-UniRule"/>
</dbReference>
<dbReference type="Gene3D" id="3.10.430.100">
    <property type="entry name" value="Ribosomal protein L9, C-terminal domain"/>
    <property type="match status" value="1"/>
</dbReference>
<dbReference type="Gene3D" id="3.40.5.10">
    <property type="entry name" value="Ribosomal protein L9, N-terminal domain"/>
    <property type="match status" value="1"/>
</dbReference>
<dbReference type="HAMAP" id="MF_00503">
    <property type="entry name" value="Ribosomal_bL9"/>
    <property type="match status" value="1"/>
</dbReference>
<dbReference type="InterPro" id="IPR000244">
    <property type="entry name" value="Ribosomal_bL9"/>
</dbReference>
<dbReference type="InterPro" id="IPR009027">
    <property type="entry name" value="Ribosomal_bL9/RNase_H1_N"/>
</dbReference>
<dbReference type="InterPro" id="IPR020594">
    <property type="entry name" value="Ribosomal_bL9_bac/chp"/>
</dbReference>
<dbReference type="InterPro" id="IPR020069">
    <property type="entry name" value="Ribosomal_bL9_C"/>
</dbReference>
<dbReference type="InterPro" id="IPR036791">
    <property type="entry name" value="Ribosomal_bL9_C_sf"/>
</dbReference>
<dbReference type="InterPro" id="IPR020070">
    <property type="entry name" value="Ribosomal_bL9_N"/>
</dbReference>
<dbReference type="InterPro" id="IPR036935">
    <property type="entry name" value="Ribosomal_bL9_N_sf"/>
</dbReference>
<dbReference type="NCBIfam" id="TIGR00158">
    <property type="entry name" value="L9"/>
    <property type="match status" value="1"/>
</dbReference>
<dbReference type="PANTHER" id="PTHR21368">
    <property type="entry name" value="50S RIBOSOMAL PROTEIN L9"/>
    <property type="match status" value="1"/>
</dbReference>
<dbReference type="Pfam" id="PF03948">
    <property type="entry name" value="Ribosomal_L9_C"/>
    <property type="match status" value="1"/>
</dbReference>
<dbReference type="Pfam" id="PF01281">
    <property type="entry name" value="Ribosomal_L9_N"/>
    <property type="match status" value="1"/>
</dbReference>
<dbReference type="SUPFAM" id="SSF55658">
    <property type="entry name" value="L9 N-domain-like"/>
    <property type="match status" value="1"/>
</dbReference>
<dbReference type="SUPFAM" id="SSF55653">
    <property type="entry name" value="Ribosomal protein L9 C-domain"/>
    <property type="match status" value="1"/>
</dbReference>
<dbReference type="PROSITE" id="PS00651">
    <property type="entry name" value="RIBOSOMAL_L9"/>
    <property type="match status" value="1"/>
</dbReference>
<accession>Q0AQD4</accession>
<protein>
    <recommendedName>
        <fullName evidence="1">Large ribosomal subunit protein bL9</fullName>
    </recommendedName>
    <alternativeName>
        <fullName evidence="3">50S ribosomal protein L9</fullName>
    </alternativeName>
</protein>
<proteinExistence type="inferred from homology"/>
<reference key="1">
    <citation type="submission" date="2006-08" db="EMBL/GenBank/DDBJ databases">
        <title>Complete sequence of Maricaulis maris MCS10.</title>
        <authorList>
            <consortium name="US DOE Joint Genome Institute"/>
            <person name="Copeland A."/>
            <person name="Lucas S."/>
            <person name="Lapidus A."/>
            <person name="Barry K."/>
            <person name="Detter J.C."/>
            <person name="Glavina del Rio T."/>
            <person name="Hammon N."/>
            <person name="Israni S."/>
            <person name="Dalin E."/>
            <person name="Tice H."/>
            <person name="Pitluck S."/>
            <person name="Saunders E."/>
            <person name="Brettin T."/>
            <person name="Bruce D."/>
            <person name="Han C."/>
            <person name="Tapia R."/>
            <person name="Gilna P."/>
            <person name="Schmutz J."/>
            <person name="Larimer F."/>
            <person name="Land M."/>
            <person name="Hauser L."/>
            <person name="Kyrpides N."/>
            <person name="Mikhailova N."/>
            <person name="Viollier P."/>
            <person name="Stephens C."/>
            <person name="Richardson P."/>
        </authorList>
    </citation>
    <scope>NUCLEOTIDE SEQUENCE [LARGE SCALE GENOMIC DNA]</scope>
    <source>
        <strain>MCS10</strain>
    </source>
</reference>
<name>RL9_MARMM</name>
<keyword id="KW-1185">Reference proteome</keyword>
<keyword id="KW-0687">Ribonucleoprotein</keyword>
<keyword id="KW-0689">Ribosomal protein</keyword>
<keyword id="KW-0694">RNA-binding</keyword>
<keyword id="KW-0699">rRNA-binding</keyword>
<sequence length="209" mass="22475">MKLVLLERVENLGVIGDVVSVRPGFARNFLLPQGKALRATEANMARFEVERELLEKRNAERAAEAAESGKTIDGESFVMIRQAGESGQLYGSVTSRDIAEIVSESGTKVVRSQIALNAPIKTLGLHELKIKLHADVSVTVTINIARSQDEAERQAAGEDVIAAQADEDRAIADAQAAELFEASEEGQELAAQREATEDAGADESEETEA</sequence>
<gene>
    <name evidence="1" type="primary">rplI</name>
    <name type="ordered locus">Mmar10_1210</name>
</gene>
<feature type="chain" id="PRO_1000014807" description="Large ribosomal subunit protein bL9">
    <location>
        <begin position="1"/>
        <end position="209"/>
    </location>
</feature>
<feature type="region of interest" description="Disordered" evidence="2">
    <location>
        <begin position="181"/>
        <end position="209"/>
    </location>
</feature>
<feature type="compositionally biased region" description="Acidic residues" evidence="2">
    <location>
        <begin position="197"/>
        <end position="209"/>
    </location>
</feature>
<organism>
    <name type="scientific">Maricaulis maris (strain MCS10)</name>
    <name type="common">Caulobacter maris</name>
    <dbReference type="NCBI Taxonomy" id="394221"/>
    <lineage>
        <taxon>Bacteria</taxon>
        <taxon>Pseudomonadati</taxon>
        <taxon>Pseudomonadota</taxon>
        <taxon>Alphaproteobacteria</taxon>
        <taxon>Maricaulales</taxon>
        <taxon>Maricaulaceae</taxon>
        <taxon>Maricaulis</taxon>
    </lineage>
</organism>
<evidence type="ECO:0000255" key="1">
    <source>
        <dbReference type="HAMAP-Rule" id="MF_00503"/>
    </source>
</evidence>
<evidence type="ECO:0000256" key="2">
    <source>
        <dbReference type="SAM" id="MobiDB-lite"/>
    </source>
</evidence>
<evidence type="ECO:0000305" key="3"/>
<comment type="function">
    <text evidence="1">Binds to the 23S rRNA.</text>
</comment>
<comment type="similarity">
    <text evidence="1">Belongs to the bacterial ribosomal protein bL9 family.</text>
</comment>